<feature type="chain" id="PRO_1000044932" description="Pole-localizer protein TmaR">
    <location>
        <begin position="1"/>
        <end position="114"/>
    </location>
</feature>
<feature type="region of interest" description="Disordered" evidence="2">
    <location>
        <begin position="89"/>
        <end position="114"/>
    </location>
</feature>
<feature type="coiled-coil region" evidence="1">
    <location>
        <begin position="70"/>
        <end position="111"/>
    </location>
</feature>
<protein>
    <recommendedName>
        <fullName evidence="1">Pole-localizer protein TmaR</fullName>
    </recommendedName>
</protein>
<comment type="function">
    <text evidence="1">Pole-localizer protein involved in the regulation of several cellular processes.</text>
</comment>
<comment type="subcellular location">
    <subcellularLocation>
        <location evidence="1">Cytoplasm</location>
    </subcellularLocation>
</comment>
<comment type="similarity">
    <text evidence="1">Belongs to the pole-localizer TmaR family.</text>
</comment>
<sequence>MEIVNKQSFQDVLEYVRMYRLKNRIKRDMEDNNRKIRDNQKRILLLDNLNQYIRDDMTIAEVRGIIESMRDDYESRVDDYTIRNAELSKQRREASTKMKEQKKAHAELLKNAEK</sequence>
<accession>A5UIT6</accession>
<reference key="1">
    <citation type="journal article" date="2007" name="Genome Biol.">
        <title>Characterization and modeling of the Haemophilus influenzae core and supragenomes based on the complete genomic sequences of Rd and 12 clinical nontypeable strains.</title>
        <authorList>
            <person name="Hogg J.S."/>
            <person name="Hu F.Z."/>
            <person name="Janto B."/>
            <person name="Boissy R."/>
            <person name="Hayes J."/>
            <person name="Keefe R."/>
            <person name="Post J.C."/>
            <person name="Ehrlich G.D."/>
        </authorList>
    </citation>
    <scope>NUCLEOTIDE SEQUENCE [LARGE SCALE GENOMIC DNA]</scope>
    <source>
        <strain>PittGG</strain>
    </source>
</reference>
<evidence type="ECO:0000255" key="1">
    <source>
        <dbReference type="HAMAP-Rule" id="MF_00683"/>
    </source>
</evidence>
<evidence type="ECO:0000256" key="2">
    <source>
        <dbReference type="SAM" id="MobiDB-lite"/>
    </source>
</evidence>
<keyword id="KW-0175">Coiled coil</keyword>
<keyword id="KW-0963">Cytoplasm</keyword>
<proteinExistence type="inferred from homology"/>
<gene>
    <name evidence="1" type="primary">tmaR</name>
    <name type="ordered locus">CGSHiGG_09540</name>
</gene>
<dbReference type="EMBL" id="CP000672">
    <property type="protein sequence ID" value="ABR00692.1"/>
    <property type="molecule type" value="Genomic_DNA"/>
</dbReference>
<dbReference type="SMR" id="A5UIT6"/>
<dbReference type="KEGG" id="hiq:CGSHiGG_09540"/>
<dbReference type="HOGENOM" id="CLU_153146_0_0_6"/>
<dbReference type="Proteomes" id="UP000001990">
    <property type="component" value="Chromosome"/>
</dbReference>
<dbReference type="GO" id="GO:0005829">
    <property type="term" value="C:cytosol"/>
    <property type="evidence" value="ECO:0007669"/>
    <property type="project" value="TreeGrafter"/>
</dbReference>
<dbReference type="HAMAP" id="MF_00683">
    <property type="entry name" value="Pole_loc_TmaR"/>
    <property type="match status" value="1"/>
</dbReference>
<dbReference type="InterPro" id="IPR007458">
    <property type="entry name" value="DUF496"/>
</dbReference>
<dbReference type="NCBIfam" id="NF003844">
    <property type="entry name" value="PRK05423.1"/>
    <property type="match status" value="1"/>
</dbReference>
<dbReference type="PANTHER" id="PTHR39591">
    <property type="entry name" value="UPF0265 PROTEIN YEEX"/>
    <property type="match status" value="1"/>
</dbReference>
<dbReference type="PANTHER" id="PTHR39591:SF1">
    <property type="entry name" value="UPF0265 PROTEIN YEEX"/>
    <property type="match status" value="1"/>
</dbReference>
<dbReference type="Pfam" id="PF04363">
    <property type="entry name" value="DUF496"/>
    <property type="match status" value="1"/>
</dbReference>
<dbReference type="PIRSF" id="PIRSF028773">
    <property type="entry name" value="UCP028773"/>
    <property type="match status" value="1"/>
</dbReference>
<name>TMAR_HAEIG</name>
<organism>
    <name type="scientific">Haemophilus influenzae (strain PittGG)</name>
    <dbReference type="NCBI Taxonomy" id="374931"/>
    <lineage>
        <taxon>Bacteria</taxon>
        <taxon>Pseudomonadati</taxon>
        <taxon>Pseudomonadota</taxon>
        <taxon>Gammaproteobacteria</taxon>
        <taxon>Pasteurellales</taxon>
        <taxon>Pasteurellaceae</taxon>
        <taxon>Haemophilus</taxon>
    </lineage>
</organism>